<comment type="function">
    <text evidence="1 6 8 12">The egg defensive protein perivitellin-2 is a pore-forming two-subunit glycoprotein that affects both the nervous and digestive systems of mammals (PubMed:18640143, PubMed:23737950). In addition, it is a source of both structural and energetic molecules during embryonic development (Probable). The tachylectin subunit (31 kDa) binds target membranes while the MACPF subunit (67 kDa) disrupts lipid bilayers forming large pores altering the plasma membrance conductance (PubMed:23737950). Both in vivo and in vitro, the protein shows wide pH range stability and is resistant to enzymatic proteolysis from gastrointestinal environments (PubMed:23737950). It specifically binds mature enterocytes but does not cause cell disruption on caco-2 (human colorectal adenocarcinoma cells) or rat intestinal cells (PubMed:23737950). After oral administration to mice, it binds enterocytes and induces large dose-dependent morphological changes on their small intestine mucosa, reducing the absorptive surface (By similarity). Additionally, it is detected in the Peyer's patches where it activates lymphoid follicles and triggers apoptosis (By similarity). The toxin can also traverse the intestinal barrier and induce oral adaptive immunity with evidence of circulating antibody response (PubMed:23737950). The toxin also shows hemagglutination properties thanks to the tachylectin subunit, but does not show hemolytic activity (PubMed:23737950). In addition to enterotoxin activity, the toxin also acts as a neurotoxin, since an intraperitoneal injection induces paralysis of the mice rear limbs, followed by death (PubMed:23737950).</text>
</comment>
<comment type="subunit">
    <text evidence="7 9">Perivitellin-2 is a heterooctamer of 4 identical 98 kDa heterodimers, each composed of one 31 kDa and one 67 kDa subunits. The 98 kDa heterodimer subunits are held together by disulfide bridges while the heterodimers are assembled into the native perivitellin-2 octamer by non-covalent forces.</text>
</comment>
<comment type="subcellular location">
    <subcellularLocation>
        <location evidence="11">Secreted</location>
    </subcellularLocation>
    <subcellularLocation>
        <location evidence="8">Target cell membrane</location>
    </subcellularLocation>
</comment>
<comment type="tissue specificity">
    <text evidence="5">Produced by albumen secretory cells. Found in developing eggs.</text>
</comment>
<comment type="developmental stage">
    <text evidence="5">Albumen secretory cells produce perivitellin-2 during the reproductive period.</text>
</comment>
<comment type="PTM">
    <text evidence="4">Glycosylated. Contains four O-linked and one N-linked oligosaccharide bonds. The protein contains 2.5% of carbohydrates (high levels of mannose, galactose, and NAcGlucosamine, and small amounts of NacGalactosamine).</text>
</comment>
<comment type="PTM">
    <text evidence="9">PV2 is a very high density lipoprotein (VHDL). It contains 3.75% of lipids. The major lipid classes are free sterols and phospholipids and also have significant quantities of energy-providing triacylglycerides and free fatty acids.</text>
</comment>
<comment type="toxic dose">
    <text evidence="6">LD(50) is 250 ug/kg by intraperitoneal injection into mice.</text>
</comment>
<comment type="online information" name="Protein Spotlight">
    <link uri="https://www.proteinspotlight.org/back_issues/100"/>
    <text>A snail's sting - Issue 100 of December 2008</text>
</comment>
<keyword id="KW-0903">Direct protein sequencing</keyword>
<keyword id="KW-1015">Disulfide bond</keyword>
<keyword id="KW-0260">Enterotoxin</keyword>
<keyword id="KW-0325">Glycoprotein</keyword>
<keyword id="KW-0348">Hemagglutinin</keyword>
<keyword id="KW-0449">Lipoprotein</keyword>
<keyword id="KW-0472">Membrane</keyword>
<keyword id="KW-0528">Neurotoxin</keyword>
<keyword id="KW-0964">Secreted</keyword>
<keyword id="KW-0732">Signal</keyword>
<keyword id="KW-0758">Storage protein</keyword>
<keyword id="KW-1052">Target cell membrane</keyword>
<keyword id="KW-1053">Target membrane</keyword>
<keyword id="KW-0800">Toxin</keyword>
<reference key="1">
    <citation type="journal article" date="2013" name="PLoS ONE">
        <title>Novel animal defenses against predation: a snail egg neurotoxin combining lectin and pore-forming chains that resembles plant defense and bacteria attack toxins.</title>
        <authorList>
            <person name="Dreon M.S."/>
            <person name="Frassa M.V."/>
            <person name="Ceolin M."/>
            <person name="Ituarte S."/>
            <person name="Qiu J.W."/>
            <person name="Sun J."/>
            <person name="Fernandez P.E."/>
            <person name="Heras H."/>
        </authorList>
    </citation>
    <scope>NUCLEOTIDE SEQUENCE [MRNA]</scope>
    <scope>FUNCTION</scope>
    <scope>SUBCELLULAR LOCATION</scope>
    <source>
        <tissue>Albumen gland</tissue>
    </source>
</reference>
<reference key="2">
    <citation type="journal article" date="2002" name="J. Exp. Zool.">
        <title>Synthesis, distribution, and levels of an egg lipoprotein from the apple snail Pomacea canaliculata (Mollusca: Gastropoda).</title>
        <authorList>
            <person name="Dreon M."/>
            <person name="Lavarias S."/>
            <person name="Garin C.F."/>
            <person name="Heras H."/>
            <person name="Pollero R.J."/>
        </authorList>
    </citation>
    <scope>PROTEIN SEQUENCE OF 27-44</scope>
    <source>
        <tissue>Albumen gland</tissue>
    </source>
</reference>
<reference key="3">
    <citation type="journal article" date="1996" name="J. Exp. Zool.">
        <title>Lipoproteins of the egg perivitelline fluid of Pomacea canaliculata snails (Mollusca: Gastropoda).</title>
        <authorList>
            <person name="Garin C.F."/>
            <person name="Heras H."/>
            <person name="Pollero R.J."/>
        </authorList>
    </citation>
    <scope>SUBUNIT</scope>
    <scope>LIPID COMPOSITION</scope>
</reference>
<reference key="4">
    <citation type="journal article" date="1998" name="J. Exp. Zool.">
        <title>Biochemical composition and energy sources during embryo development and in early juveniles of the snail Pomacea canaliculata (Mollusca: Gastropoda).</title>
        <authorList>
            <person name="Heras H."/>
            <person name="Garin C.F."/>
            <person name="Pollero R.J."/>
        </authorList>
    </citation>
    <scope>FUNCTION</scope>
</reference>
<reference key="5">
    <citation type="journal article" date="2004" name="Mol. Reprod. Dev.">
        <title>Characterization of the major egg glycolipoproteins from the perivitellin fluid of the apple snail Pomacea canaliculata.</title>
        <authorList>
            <person name="Dreon M.S."/>
            <person name="Heras H."/>
            <person name="Pollero R.J."/>
        </authorList>
    </citation>
    <scope>CARBOHYDRATE COMPOSITION</scope>
</reference>
<reference key="6">
    <citation type="journal article" date="2006" name="Cell Tissue Res.">
        <title>Pallial oviduct of Pomacea canaliculata (Gastropoda): ultrastructural studies of the parenchymal cellular types involved in the metabolism of perivitellins.</title>
        <authorList>
            <person name="Catalan M."/>
            <person name="Dreon M.S."/>
            <person name="Heras H."/>
            <person name="Pollero R.J."/>
            <person name="Fernandez S.N."/>
            <person name="Winik B."/>
        </authorList>
    </citation>
    <scope>TISSUE SPECIFICITY</scope>
    <scope>DEVELOPMENTAL STAGE</scope>
</reference>
<reference key="7">
    <citation type="journal article" date="2008" name="Toxicon">
        <title>First egg protein with a neurotoxic effect on mice.</title>
        <authorList>
            <person name="Heras H."/>
            <person name="Frassa M.V."/>
            <person name="Fernandez P.E."/>
            <person name="Galosi C.M."/>
            <person name="Gimeno E.J."/>
            <person name="Dreon M.S."/>
        </authorList>
    </citation>
    <scope>FUNCTION</scope>
    <scope>TOXIC DOSE</scope>
</reference>
<reference key="8">
    <citation type="journal article" date="2010" name="Biochim. Biophys. Acta">
        <title>Structure and stability of the neurotoxin PV2 from the eggs of the apple snail Pomacea canaliculata.</title>
        <authorList>
            <person name="Frassa M.V."/>
            <person name="Ceolin M."/>
            <person name="Dreon M.S."/>
            <person name="Heras H."/>
        </authorList>
    </citation>
    <scope>SUBUNIT</scope>
</reference>
<evidence type="ECO:0000250" key="1">
    <source>
        <dbReference type="UniProtKB" id="P0DQO9"/>
    </source>
</evidence>
<evidence type="ECO:0000255" key="2">
    <source>
        <dbReference type="PROSITE-ProRule" id="PRU00745"/>
    </source>
</evidence>
<evidence type="ECO:0000269" key="3">
    <source>
    </source>
</evidence>
<evidence type="ECO:0000269" key="4">
    <source>
    </source>
</evidence>
<evidence type="ECO:0000269" key="5">
    <source>
    </source>
</evidence>
<evidence type="ECO:0000269" key="6">
    <source>
    </source>
</evidence>
<evidence type="ECO:0000269" key="7">
    <source>
    </source>
</evidence>
<evidence type="ECO:0000269" key="8">
    <source>
    </source>
</evidence>
<evidence type="ECO:0000269" key="9">
    <source>
    </source>
</evidence>
<evidence type="ECO:0000303" key="10">
    <source>
    </source>
</evidence>
<evidence type="ECO:0000305" key="11"/>
<evidence type="ECO:0000305" key="12">
    <source ref="4"/>
</evidence>
<protein>
    <recommendedName>
        <fullName evidence="11">Perivitellin-2 67 kDa subunit</fullName>
        <shortName evidence="11">PcPV2 67 kDa subunit</shortName>
        <shortName evidence="10">PcPV2-67</shortName>
    </recommendedName>
    <alternativeName>
        <fullName evidence="11">PV2 MACPF subunit</fullName>
    </alternativeName>
</protein>
<name>PV21_POMCA</name>
<sequence length="565" mass="62518">MSQLRWWVVSQLLLLIVVCILDHSEGARVCPKIVPGLDKLRVGVDITKLDLLPLFDLGDNGFRSAVADYTCDRGQTTVVDGESFDVPDQVDSVVIESSGQQTSSVTTIKSESQISQALSISAGISVDTAKAGFSSSASYAEMQEAITKYGRTVSQMSAVYTTCSANLSPNLLLGQNPLQTLSRLPSDFTADTEGYYDFIKTYGTHYFNKGKLGGMFLFTSETDMSYFQNKNSQQVEANIKATFASILSTETGGSSDQSKEVIEFKESSLITAKFFGGRTNLAADGLTKWQPTIAKLPYFMSGTLSTISSLIADTTKRASMELAVKNYLLKAKVANLDRLTYIRLNSWTVGHNELRDLSAQLQNLKKKTIFSDEDEKLLQSIEDQVSVPAWFSDRTTFCFRSTAVGSADQCNGQSTSTLCAEPNRYTQQYMDKTYLGDTGCRLVWKLSTTESSDWFKSVKVNFRWYPTWSPCACGPVGTPFTISAPANSWTQDYLDVTNPKFGECMLQWMIEVPPTATLWAKNLEFCIDFTCGKKKQCVDANHWTEPYLDISAHEACGMSWALIAK</sequence>
<feature type="signal peptide" evidence="3">
    <location>
        <begin position="1"/>
        <end position="26"/>
    </location>
</feature>
<feature type="chain" id="PRO_0000355071" description="Perivitellin-2 67 kDa subunit">
    <location>
        <begin position="27"/>
        <end position="565"/>
    </location>
</feature>
<feature type="domain" description="MACPF" evidence="2">
    <location>
        <begin position="27"/>
        <end position="340"/>
    </location>
</feature>
<feature type="disulfide bond" description="Interchain" evidence="1">
    <location>
        <position position="398"/>
    </location>
</feature>
<dbReference type="EMBL" id="JX155861">
    <property type="protein sequence ID" value="AGG40751.1"/>
    <property type="molecule type" value="mRNA"/>
</dbReference>
<dbReference type="SASBDB" id="P0C8G6"/>
<dbReference type="TCDB" id="1.C.39.2.9">
    <property type="family name" value="the membrane attack complex/perforin (macpf) family"/>
</dbReference>
<dbReference type="OrthoDB" id="6112368at2759"/>
<dbReference type="GO" id="GO:0005576">
    <property type="term" value="C:extracellular region"/>
    <property type="evidence" value="ECO:0007669"/>
    <property type="project" value="UniProtKB-SubCell"/>
</dbReference>
<dbReference type="GO" id="GO:0016020">
    <property type="term" value="C:membrane"/>
    <property type="evidence" value="ECO:0007669"/>
    <property type="project" value="UniProtKB-KW"/>
</dbReference>
<dbReference type="GO" id="GO:0044218">
    <property type="term" value="C:other organism cell membrane"/>
    <property type="evidence" value="ECO:0007669"/>
    <property type="project" value="UniProtKB-KW"/>
</dbReference>
<dbReference type="GO" id="GO:0045735">
    <property type="term" value="F:nutrient reservoir activity"/>
    <property type="evidence" value="ECO:0007669"/>
    <property type="project" value="UniProtKB-KW"/>
</dbReference>
<dbReference type="GO" id="GO:0090729">
    <property type="term" value="F:toxin activity"/>
    <property type="evidence" value="ECO:0007669"/>
    <property type="project" value="UniProtKB-KW"/>
</dbReference>
<dbReference type="GO" id="GO:0022829">
    <property type="term" value="F:wide pore channel activity"/>
    <property type="evidence" value="ECO:0007669"/>
    <property type="project" value="TreeGrafter"/>
</dbReference>
<dbReference type="GO" id="GO:0051607">
    <property type="term" value="P:defense response to virus"/>
    <property type="evidence" value="ECO:0007669"/>
    <property type="project" value="TreeGrafter"/>
</dbReference>
<dbReference type="InterPro" id="IPR020864">
    <property type="entry name" value="MACPF"/>
</dbReference>
<dbReference type="InterPro" id="IPR020863">
    <property type="entry name" value="MACPF_CS"/>
</dbReference>
<dbReference type="InterPro" id="IPR052784">
    <property type="entry name" value="Perforin-1_pore-forming"/>
</dbReference>
<dbReference type="PANTHER" id="PTHR46096">
    <property type="entry name" value="PERFORIN-1"/>
    <property type="match status" value="1"/>
</dbReference>
<dbReference type="PANTHER" id="PTHR46096:SF3">
    <property type="entry name" value="PERFORIN-1"/>
    <property type="match status" value="1"/>
</dbReference>
<dbReference type="Pfam" id="PF01823">
    <property type="entry name" value="MACPF"/>
    <property type="match status" value="1"/>
</dbReference>
<dbReference type="PROSITE" id="PS00279">
    <property type="entry name" value="MACPF_1"/>
    <property type="match status" value="1"/>
</dbReference>
<dbReference type="PROSITE" id="PS51412">
    <property type="entry name" value="MACPF_2"/>
    <property type="match status" value="1"/>
</dbReference>
<proteinExistence type="evidence at protein level"/>
<organism>
    <name type="scientific">Pomacea canaliculata</name>
    <name type="common">Golden apple snail</name>
    <dbReference type="NCBI Taxonomy" id="400727"/>
    <lineage>
        <taxon>Eukaryota</taxon>
        <taxon>Metazoa</taxon>
        <taxon>Spiralia</taxon>
        <taxon>Lophotrochozoa</taxon>
        <taxon>Mollusca</taxon>
        <taxon>Gastropoda</taxon>
        <taxon>Caenogastropoda</taxon>
        <taxon>Architaenioglossa</taxon>
        <taxon>Ampullarioidea</taxon>
        <taxon>Ampullariidae</taxon>
        <taxon>Pomacea</taxon>
    </lineage>
</organism>
<accession>P0C8G6</accession>
<accession>M1TA54</accession>